<reference key="1">
    <citation type="journal article" date="2011" name="MBio">
        <title>Novel metabolic attributes of the genus Cyanothece, comprising a group of unicellular nitrogen-fixing Cyanobacteria.</title>
        <authorList>
            <person name="Bandyopadhyay A."/>
            <person name="Elvitigala T."/>
            <person name="Welsh E."/>
            <person name="Stockel J."/>
            <person name="Liberton M."/>
            <person name="Min H."/>
            <person name="Sherman L.A."/>
            <person name="Pakrasi H.B."/>
        </authorList>
    </citation>
    <scope>NUCLEOTIDE SEQUENCE [LARGE SCALE GENOMIC DNA]</scope>
    <source>
        <strain>PCC 7425 / ATCC 29141</strain>
    </source>
</reference>
<sequence>MDYRDAGVDIQAGRDFVNRIKALVQQTTRSEVLGGLGGFGGCFQLPEGYRQPVLVSGADGVGTKLKIAQALNQHHTIGIDLVAMCVNDVLTCGAEPLFFLDYLATGHLEPEALTDVIAGIAQGCQQAGCALLGGETAEMPGFYPVGEYDLAGFCVGIVEKAEMLNGSQVRMGDRAIGLASSGVHSNGYSLVRKIVDEFIGPAAREQSEAGATEALVSPWSITPWAEREDLPPVDRQQSLGAALLTPTQIYVKPVLAAQRSGLTLHGMAHITGGGLPENLPRCLGEGQSVQLDPQSWPAPPIFDWIASTGSVPTAAMFDTFNMGIGFVLIVPPDEVESALRWFNTQQCPAYGIGEVVAGAGEVLGLPG</sequence>
<protein>
    <recommendedName>
        <fullName evidence="1">Phosphoribosylformylglycinamidine cyclo-ligase</fullName>
        <ecNumber evidence="1">6.3.3.1</ecNumber>
    </recommendedName>
    <alternativeName>
        <fullName evidence="1">AIR synthase</fullName>
    </alternativeName>
    <alternativeName>
        <fullName evidence="1">AIRS</fullName>
    </alternativeName>
    <alternativeName>
        <fullName evidence="1">Phosphoribosyl-aminoimidazole synthetase</fullName>
    </alternativeName>
</protein>
<gene>
    <name evidence="1" type="primary">purM</name>
    <name type="ordered locus">Cyan7425_3341</name>
</gene>
<evidence type="ECO:0000255" key="1">
    <source>
        <dbReference type="HAMAP-Rule" id="MF_00741"/>
    </source>
</evidence>
<feature type="chain" id="PRO_1000148276" description="Phosphoribosylformylglycinamidine cyclo-ligase">
    <location>
        <begin position="1"/>
        <end position="367"/>
    </location>
</feature>
<proteinExistence type="inferred from homology"/>
<comment type="catalytic activity">
    <reaction evidence="1">
        <text>2-formamido-N(1)-(5-O-phospho-beta-D-ribosyl)acetamidine + ATP = 5-amino-1-(5-phospho-beta-D-ribosyl)imidazole + ADP + phosphate + H(+)</text>
        <dbReference type="Rhea" id="RHEA:23032"/>
        <dbReference type="ChEBI" id="CHEBI:15378"/>
        <dbReference type="ChEBI" id="CHEBI:30616"/>
        <dbReference type="ChEBI" id="CHEBI:43474"/>
        <dbReference type="ChEBI" id="CHEBI:137981"/>
        <dbReference type="ChEBI" id="CHEBI:147287"/>
        <dbReference type="ChEBI" id="CHEBI:456216"/>
        <dbReference type="EC" id="6.3.3.1"/>
    </reaction>
</comment>
<comment type="pathway">
    <text evidence="1">Purine metabolism; IMP biosynthesis via de novo pathway; 5-amino-1-(5-phospho-D-ribosyl)imidazole from N(2)-formyl-N(1)-(5-phospho-D-ribosyl)glycinamide: step 2/2.</text>
</comment>
<comment type="subcellular location">
    <subcellularLocation>
        <location evidence="1">Cytoplasm</location>
    </subcellularLocation>
</comment>
<comment type="similarity">
    <text evidence="1">Belongs to the AIR synthase family.</text>
</comment>
<organism>
    <name type="scientific">Cyanothece sp. (strain PCC 7425 / ATCC 29141)</name>
    <dbReference type="NCBI Taxonomy" id="395961"/>
    <lineage>
        <taxon>Bacteria</taxon>
        <taxon>Bacillati</taxon>
        <taxon>Cyanobacteriota</taxon>
        <taxon>Cyanophyceae</taxon>
        <taxon>Gomontiellales</taxon>
        <taxon>Cyanothecaceae</taxon>
        <taxon>Cyanothece</taxon>
    </lineage>
</organism>
<accession>B8HPV7</accession>
<keyword id="KW-0067">ATP-binding</keyword>
<keyword id="KW-0963">Cytoplasm</keyword>
<keyword id="KW-0436">Ligase</keyword>
<keyword id="KW-0547">Nucleotide-binding</keyword>
<keyword id="KW-0658">Purine biosynthesis</keyword>
<name>PUR5_CYAP4</name>
<dbReference type="EC" id="6.3.3.1" evidence="1"/>
<dbReference type="EMBL" id="CP001344">
    <property type="protein sequence ID" value="ACL45666.1"/>
    <property type="molecule type" value="Genomic_DNA"/>
</dbReference>
<dbReference type="SMR" id="B8HPV7"/>
<dbReference type="STRING" id="395961.Cyan7425_3341"/>
<dbReference type="KEGG" id="cyn:Cyan7425_3341"/>
<dbReference type="eggNOG" id="COG0150">
    <property type="taxonomic scope" value="Bacteria"/>
</dbReference>
<dbReference type="HOGENOM" id="CLU_047116_0_0_3"/>
<dbReference type="OrthoDB" id="9802507at2"/>
<dbReference type="UniPathway" id="UPA00074">
    <property type="reaction ID" value="UER00129"/>
</dbReference>
<dbReference type="GO" id="GO:0005829">
    <property type="term" value="C:cytosol"/>
    <property type="evidence" value="ECO:0007669"/>
    <property type="project" value="TreeGrafter"/>
</dbReference>
<dbReference type="GO" id="GO:0005524">
    <property type="term" value="F:ATP binding"/>
    <property type="evidence" value="ECO:0007669"/>
    <property type="project" value="UniProtKB-KW"/>
</dbReference>
<dbReference type="GO" id="GO:0004637">
    <property type="term" value="F:phosphoribosylamine-glycine ligase activity"/>
    <property type="evidence" value="ECO:0007669"/>
    <property type="project" value="TreeGrafter"/>
</dbReference>
<dbReference type="GO" id="GO:0004641">
    <property type="term" value="F:phosphoribosylformylglycinamidine cyclo-ligase activity"/>
    <property type="evidence" value="ECO:0007669"/>
    <property type="project" value="UniProtKB-UniRule"/>
</dbReference>
<dbReference type="GO" id="GO:0006189">
    <property type="term" value="P:'de novo' IMP biosynthetic process"/>
    <property type="evidence" value="ECO:0007669"/>
    <property type="project" value="UniProtKB-UniRule"/>
</dbReference>
<dbReference type="GO" id="GO:0046084">
    <property type="term" value="P:adenine biosynthetic process"/>
    <property type="evidence" value="ECO:0007669"/>
    <property type="project" value="TreeGrafter"/>
</dbReference>
<dbReference type="CDD" id="cd02196">
    <property type="entry name" value="PurM"/>
    <property type="match status" value="1"/>
</dbReference>
<dbReference type="FunFam" id="3.30.1330.10:FF:000001">
    <property type="entry name" value="Phosphoribosylformylglycinamidine cyclo-ligase"/>
    <property type="match status" value="1"/>
</dbReference>
<dbReference type="FunFam" id="3.90.650.10:FF:000011">
    <property type="entry name" value="Phosphoribosylformylglycinamidine cyclo-ligase"/>
    <property type="match status" value="1"/>
</dbReference>
<dbReference type="Gene3D" id="3.90.650.10">
    <property type="entry name" value="PurM-like C-terminal domain"/>
    <property type="match status" value="1"/>
</dbReference>
<dbReference type="Gene3D" id="3.30.1330.10">
    <property type="entry name" value="PurM-like, N-terminal domain"/>
    <property type="match status" value="1"/>
</dbReference>
<dbReference type="HAMAP" id="MF_00741">
    <property type="entry name" value="AIRS"/>
    <property type="match status" value="1"/>
</dbReference>
<dbReference type="InterPro" id="IPR010918">
    <property type="entry name" value="PurM-like_C_dom"/>
</dbReference>
<dbReference type="InterPro" id="IPR036676">
    <property type="entry name" value="PurM-like_C_sf"/>
</dbReference>
<dbReference type="InterPro" id="IPR016188">
    <property type="entry name" value="PurM-like_N"/>
</dbReference>
<dbReference type="InterPro" id="IPR036921">
    <property type="entry name" value="PurM-like_N_sf"/>
</dbReference>
<dbReference type="InterPro" id="IPR004733">
    <property type="entry name" value="PurM_cligase"/>
</dbReference>
<dbReference type="NCBIfam" id="TIGR00878">
    <property type="entry name" value="purM"/>
    <property type="match status" value="1"/>
</dbReference>
<dbReference type="PANTHER" id="PTHR10520:SF12">
    <property type="entry name" value="TRIFUNCTIONAL PURINE BIOSYNTHETIC PROTEIN ADENOSINE-3"/>
    <property type="match status" value="1"/>
</dbReference>
<dbReference type="PANTHER" id="PTHR10520">
    <property type="entry name" value="TRIFUNCTIONAL PURINE BIOSYNTHETIC PROTEIN ADENOSINE-3-RELATED"/>
    <property type="match status" value="1"/>
</dbReference>
<dbReference type="Pfam" id="PF00586">
    <property type="entry name" value="AIRS"/>
    <property type="match status" value="1"/>
</dbReference>
<dbReference type="Pfam" id="PF02769">
    <property type="entry name" value="AIRS_C"/>
    <property type="match status" value="1"/>
</dbReference>
<dbReference type="SUPFAM" id="SSF56042">
    <property type="entry name" value="PurM C-terminal domain-like"/>
    <property type="match status" value="1"/>
</dbReference>
<dbReference type="SUPFAM" id="SSF55326">
    <property type="entry name" value="PurM N-terminal domain-like"/>
    <property type="match status" value="1"/>
</dbReference>